<organism>
    <name type="scientific">Beta vulgaris</name>
    <name type="common">Sugar beet</name>
    <dbReference type="NCBI Taxonomy" id="161934"/>
    <lineage>
        <taxon>Eukaryota</taxon>
        <taxon>Viridiplantae</taxon>
        <taxon>Streptophyta</taxon>
        <taxon>Embryophyta</taxon>
        <taxon>Tracheophyta</taxon>
        <taxon>Spermatophyta</taxon>
        <taxon>Magnoliopsida</taxon>
        <taxon>eudicotyledons</taxon>
        <taxon>Gunneridae</taxon>
        <taxon>Pentapetalae</taxon>
        <taxon>Caryophyllales</taxon>
        <taxon>Chenopodiaceae</taxon>
        <taxon>Betoideae</taxon>
        <taxon>Beta</taxon>
    </lineage>
</organism>
<proteinExistence type="evidence at transcript level"/>
<reference key="1">
    <citation type="journal article" date="1995" name="Theor. Appl. Genet.">
        <title>Mapping of a chloroplast RFLP marker associated with the CMS cytoplasm of sugar beet (Beta vulgaris).</title>
        <authorList>
            <person name="Ran Z."/>
            <person name="Michaelis G."/>
        </authorList>
    </citation>
    <scope>NUCLEOTIDE SEQUENCE [GENOMIC DNA]</scope>
    <source>
        <strain>cv. Altissima</strain>
        <tissue>Leaf</tissue>
    </source>
</reference>
<reference key="2">
    <citation type="journal article" date="1995" name="Curr. Genet.">
        <title>The chloroplast trnP-trnW-petG gene cluster in the mitochondrial genomes of Beta vulgaris, B. trigyna and B. webbiana: evolutionary aspects.</title>
        <authorList>
            <person name="Kubo T."/>
            <person name="Yanai Y."/>
            <person name="Kinoshita T."/>
            <person name="Mikami T."/>
        </authorList>
    </citation>
    <scope>NUCLEOTIDE SEQUENCE [GENOMIC DNA]</scope>
    <source>
        <strain>cv. TK81-O</strain>
        <tissue>Leaf</tissue>
    </source>
</reference>
<reference key="3">
    <citation type="journal article" date="2004" name="Nucleic Acids Res.">
        <title>Rapid evolution of RNA editing sites in a small non-essential plastid gene.</title>
        <authorList>
            <person name="Fiebig A."/>
            <person name="Stegemann S."/>
            <person name="Bock R."/>
        </authorList>
    </citation>
    <scope>NUCLEOTIDE SEQUENCE [GENOMIC DNA]</scope>
    <scope>RNA EDITING</scope>
    <source>
        <tissue>Leaf</tissue>
    </source>
</reference>
<reference key="4">
    <citation type="submission" date="2005-11" db="EMBL/GenBank/DDBJ databases">
        <title>Nucleotide sequence of trnP-CCA-psbL intergenic region showing organizational alteration between male-fertile and Owen cytoplasmic male sterile sugar beets.</title>
        <authorList>
            <person name="Yanai Y."/>
            <person name="Kubo T."/>
            <person name="Mikami T."/>
        </authorList>
    </citation>
    <scope>NUCLEOTIDE SEQUENCE [GENOMIC DNA]</scope>
    <source>
        <strain>cv. TK81-MS</strain>
    </source>
</reference>
<feature type="chain" id="PRO_0000220439" description="Cytochrome b6-f complex subunit 6">
    <location>
        <begin position="1"/>
        <end position="31"/>
    </location>
</feature>
<feature type="transmembrane region" description="Helical" evidence="1">
    <location>
        <begin position="4"/>
        <end position="26"/>
    </location>
</feature>
<accession>P46612</accession>
<accession>Q2Z1Q6</accession>
<accession>Q5K3T1</accession>
<comment type="function">
    <text evidence="1">Component of the cytochrome b6-f complex, which mediates electron transfer between photosystem II (PSII) and photosystem I (PSI), cyclic electron flow around PSI, and state transitions. PetL is important for photoautotrophic growth as well as for electron transfer efficiency and stability of the cytochrome b6-f complex.</text>
</comment>
<comment type="subunit">
    <text evidence="1">The 4 large subunits of the cytochrome b6-f complex are cytochrome b6, subunit IV (17 kDa polypeptide, PetD), cytochrome f and the Rieske protein, while the 4 small subunits are PetG, PetL, PetM and PetN. The complex functions as a dimer.</text>
</comment>
<comment type="subcellular location">
    <subcellularLocation>
        <location evidence="1">Plastid</location>
        <location evidence="1">Chloroplast thylakoid membrane</location>
        <topology evidence="1">Single-pass membrane protein</topology>
    </subcellularLocation>
</comment>
<comment type="RNA editing">
    <location>
        <position position="2" evidence="2"/>
    </location>
</comment>
<comment type="similarity">
    <text evidence="1">Belongs to the PetL family.</text>
</comment>
<gene>
    <name evidence="1" type="primary">petL</name>
</gene>
<dbReference type="EMBL" id="X87636">
    <property type="protein sequence ID" value="CAA60965.1"/>
    <property type="status" value="ALT_SEQ"/>
    <property type="molecule type" value="Genomic_DNA"/>
</dbReference>
<dbReference type="EMBL" id="X87637">
    <property type="protein sequence ID" value="CAA60970.1"/>
    <property type="status" value="ALT_SEQ"/>
    <property type="molecule type" value="Genomic_DNA"/>
</dbReference>
<dbReference type="EMBL" id="D38019">
    <property type="protein sequence ID" value="BAA07217.1"/>
    <property type="status" value="ALT_SEQ"/>
    <property type="molecule type" value="Genomic_DNA"/>
</dbReference>
<dbReference type="EMBL" id="AJ704433">
    <property type="protein sequence ID" value="CAG28645.1"/>
    <property type="molecule type" value="Genomic_DNA"/>
</dbReference>
<dbReference type="EMBL" id="AB242560">
    <property type="protein sequence ID" value="BAE48704.1"/>
    <property type="status" value="ALT_SEQ"/>
    <property type="molecule type" value="Genomic_DNA"/>
</dbReference>
<dbReference type="PIR" id="T14568">
    <property type="entry name" value="T14568"/>
</dbReference>
<dbReference type="SMR" id="P46612"/>
<dbReference type="GO" id="GO:0009535">
    <property type="term" value="C:chloroplast thylakoid membrane"/>
    <property type="evidence" value="ECO:0007669"/>
    <property type="project" value="UniProtKB-SubCell"/>
</dbReference>
<dbReference type="GO" id="GO:0009512">
    <property type="term" value="C:cytochrome b6f complex"/>
    <property type="evidence" value="ECO:0007669"/>
    <property type="project" value="InterPro"/>
</dbReference>
<dbReference type="GO" id="GO:0045158">
    <property type="term" value="F:electron transporter, transferring electrons within cytochrome b6/f complex of photosystem II activity"/>
    <property type="evidence" value="ECO:0007669"/>
    <property type="project" value="UniProtKB-UniRule"/>
</dbReference>
<dbReference type="HAMAP" id="MF_00433">
    <property type="entry name" value="Cytb6_f_PetL"/>
    <property type="match status" value="1"/>
</dbReference>
<dbReference type="InterPro" id="IPR007802">
    <property type="entry name" value="Cyt_b6/f_cplx_su6"/>
</dbReference>
<dbReference type="PANTHER" id="PTHR37266">
    <property type="entry name" value="CYTOCHROME B6-F COMPLEX SUBUNIT 6"/>
    <property type="match status" value="1"/>
</dbReference>
<dbReference type="PANTHER" id="PTHR37266:SF1">
    <property type="entry name" value="CYTOCHROME B6-F COMPLEX SUBUNIT 6"/>
    <property type="match status" value="1"/>
</dbReference>
<dbReference type="Pfam" id="PF05115">
    <property type="entry name" value="PetL"/>
    <property type="match status" value="1"/>
</dbReference>
<dbReference type="SUPFAM" id="SSF103436">
    <property type="entry name" value="PetL subunit of the cytochrome b6f complex"/>
    <property type="match status" value="1"/>
</dbReference>
<name>PETL_BETVU</name>
<evidence type="ECO:0000255" key="1">
    <source>
        <dbReference type="HAMAP-Rule" id="MF_00433"/>
    </source>
</evidence>
<evidence type="ECO:0000269" key="2">
    <source>
    </source>
</evidence>
<protein>
    <recommendedName>
        <fullName evidence="1">Cytochrome b6-f complex subunit 6</fullName>
    </recommendedName>
    <alternativeName>
        <fullName evidence="1">Cytochrome b6-f complex subunit PetL</fullName>
    </alternativeName>
    <alternativeName>
        <fullName evidence="1">Cytochrome b6-f complex subunit VI</fullName>
    </alternativeName>
</protein>
<sequence length="31" mass="3416">MLTLTSYFGFLLAALTITSALFIGLNKIRLI</sequence>
<geneLocation type="chloroplast"/>
<keyword id="KW-0150">Chloroplast</keyword>
<keyword id="KW-0249">Electron transport</keyword>
<keyword id="KW-0472">Membrane</keyword>
<keyword id="KW-0934">Plastid</keyword>
<keyword id="KW-0679">Respiratory chain</keyword>
<keyword id="KW-0691">RNA editing</keyword>
<keyword id="KW-0793">Thylakoid</keyword>
<keyword id="KW-0812">Transmembrane</keyword>
<keyword id="KW-1133">Transmembrane helix</keyword>
<keyword id="KW-0813">Transport</keyword>